<sequence length="524" mass="57203">MWVTNTVLLYRPNSMNRLTFSYPTRLAHSRKASSFSRFFRSSKRKKRVTTLSTKKPDDDHEISPVPPEKFSADLGWLSAFPHVSVASMANFLFGYHIGVMNGPIVSIARELGFEGNSILEGLVVSIFIAGAFIGSIVAGPLVDKFGYRRTFQIFTIPLILGALVSAQAHSLDEILCGRFLVGLGIGVNTVLVPIYISEVAPTKYRGSLGTLCQIGTCLGIIFSLLLGIPAEDDPHWWRTMLYVASMPGFLLALGMQFAVESPRWLCKVGRLDDAKVVIRNIWGGSEVEKAVEDFQSVMKNSGSNLNSRWLELLDKPHSRVAFIGGSLFVLQQFAGINGVLYFSSLTFQNVGITSGAQASLYVGVTNFAGALCASYLIDKQGRKKLLIGSYLGMAVSMFLIVYAVGFPLDEDLSQSLSILGTLMYIFSFAIGAGPVTGLIIPELSSNRTRGKIMGFSFSVHWVSNFLVGLFFLDLVEKYGVGTVYASFGSVSLLAAAFSHLFTVETKGRSLEEIELSLNSRDDLS</sequence>
<protein>
    <recommendedName>
        <fullName>Probable plastidic glucose transporter 1</fullName>
    </recommendedName>
</protein>
<dbReference type="EMBL" id="AC005322">
    <property type="protein sequence ID" value="AAC98002.1"/>
    <property type="status" value="ALT_SEQ"/>
    <property type="molecule type" value="Genomic_DNA"/>
</dbReference>
<dbReference type="EMBL" id="CP002684">
    <property type="protein sequence ID" value="AEE27781.1"/>
    <property type="molecule type" value="Genomic_DNA"/>
</dbReference>
<dbReference type="EMBL" id="BT015814">
    <property type="protein sequence ID" value="AAU94377.1"/>
    <property type="molecule type" value="mRNA"/>
</dbReference>
<dbReference type="EMBL" id="BT020194">
    <property type="protein sequence ID" value="AAV59260.1"/>
    <property type="molecule type" value="mRNA"/>
</dbReference>
<dbReference type="EMBL" id="AK226802">
    <property type="protein sequence ID" value="BAE98899.1"/>
    <property type="molecule type" value="mRNA"/>
</dbReference>
<dbReference type="PIR" id="C86184">
    <property type="entry name" value="C86184"/>
</dbReference>
<dbReference type="RefSeq" id="NP_171996.2">
    <molecule id="Q0WVE9-1"/>
    <property type="nucleotide sequence ID" value="NM_100382.3"/>
</dbReference>
<dbReference type="SMR" id="Q0WVE9"/>
<dbReference type="FunCoup" id="Q0WVE9">
    <property type="interactions" value="335"/>
</dbReference>
<dbReference type="STRING" id="3702.Q0WVE9"/>
<dbReference type="iPTMnet" id="Q0WVE9"/>
<dbReference type="PaxDb" id="3702-AT1G05030.1"/>
<dbReference type="ProteomicsDB" id="234730">
    <molecule id="Q0WVE9-1"/>
</dbReference>
<dbReference type="EnsemblPlants" id="AT1G05030.1">
    <molecule id="Q0WVE9-1"/>
    <property type="protein sequence ID" value="AT1G05030.1"/>
    <property type="gene ID" value="AT1G05030"/>
</dbReference>
<dbReference type="GeneID" id="839340"/>
<dbReference type="Gramene" id="AT1G05030.1">
    <molecule id="Q0WVE9-1"/>
    <property type="protein sequence ID" value="AT1G05030.1"/>
    <property type="gene ID" value="AT1G05030"/>
</dbReference>
<dbReference type="KEGG" id="ath:AT1G05030"/>
<dbReference type="Araport" id="AT1G05030"/>
<dbReference type="TAIR" id="AT1G05030"/>
<dbReference type="eggNOG" id="KOG0254">
    <property type="taxonomic scope" value="Eukaryota"/>
</dbReference>
<dbReference type="HOGENOM" id="CLU_001265_30_5_1"/>
<dbReference type="InParanoid" id="Q0WVE9"/>
<dbReference type="OrthoDB" id="6612291at2759"/>
<dbReference type="PhylomeDB" id="Q0WVE9"/>
<dbReference type="PRO" id="PR:Q0WVE9"/>
<dbReference type="Proteomes" id="UP000006548">
    <property type="component" value="Chromosome 1"/>
</dbReference>
<dbReference type="ExpressionAtlas" id="Q0WVE9">
    <property type="expression patterns" value="baseline and differential"/>
</dbReference>
<dbReference type="GO" id="GO:0031969">
    <property type="term" value="C:chloroplast membrane"/>
    <property type="evidence" value="ECO:0007669"/>
    <property type="project" value="UniProtKB-SubCell"/>
</dbReference>
<dbReference type="GO" id="GO:0022857">
    <property type="term" value="F:transmembrane transporter activity"/>
    <property type="evidence" value="ECO:0007669"/>
    <property type="project" value="InterPro"/>
</dbReference>
<dbReference type="CDD" id="cd17315">
    <property type="entry name" value="MFS_GLUT_like"/>
    <property type="match status" value="1"/>
</dbReference>
<dbReference type="Gene3D" id="1.20.1250.20">
    <property type="entry name" value="MFS general substrate transporter like domains"/>
    <property type="match status" value="1"/>
</dbReference>
<dbReference type="InterPro" id="IPR045263">
    <property type="entry name" value="GLUT"/>
</dbReference>
<dbReference type="InterPro" id="IPR020846">
    <property type="entry name" value="MFS_dom"/>
</dbReference>
<dbReference type="InterPro" id="IPR005828">
    <property type="entry name" value="MFS_sugar_transport-like"/>
</dbReference>
<dbReference type="InterPro" id="IPR036259">
    <property type="entry name" value="MFS_trans_sf"/>
</dbReference>
<dbReference type="InterPro" id="IPR003663">
    <property type="entry name" value="Sugar/inositol_transpt"/>
</dbReference>
<dbReference type="InterPro" id="IPR005829">
    <property type="entry name" value="Sugar_transporter_CS"/>
</dbReference>
<dbReference type="NCBIfam" id="TIGR00879">
    <property type="entry name" value="SP"/>
    <property type="match status" value="1"/>
</dbReference>
<dbReference type="PANTHER" id="PTHR23503:SF103">
    <property type="entry name" value="PLASTIDIC GLUCOSE TRANSPORTER 1-RELATED"/>
    <property type="match status" value="1"/>
</dbReference>
<dbReference type="PANTHER" id="PTHR23503">
    <property type="entry name" value="SOLUTE CARRIER FAMILY 2"/>
    <property type="match status" value="1"/>
</dbReference>
<dbReference type="Pfam" id="PF00083">
    <property type="entry name" value="Sugar_tr"/>
    <property type="match status" value="1"/>
</dbReference>
<dbReference type="PRINTS" id="PR00171">
    <property type="entry name" value="SUGRTRNSPORT"/>
</dbReference>
<dbReference type="SUPFAM" id="SSF103473">
    <property type="entry name" value="MFS general substrate transporter"/>
    <property type="match status" value="1"/>
</dbReference>
<dbReference type="PROSITE" id="PS50850">
    <property type="entry name" value="MFS"/>
    <property type="match status" value="1"/>
</dbReference>
<dbReference type="PROSITE" id="PS00217">
    <property type="entry name" value="SUGAR_TRANSPORT_2"/>
    <property type="match status" value="1"/>
</dbReference>
<proteinExistence type="evidence at transcript level"/>
<evidence type="ECO:0000250" key="1"/>
<evidence type="ECO:0000255" key="2"/>
<evidence type="ECO:0000303" key="3">
    <source ref="4"/>
</evidence>
<evidence type="ECO:0000305" key="4"/>
<reference key="1">
    <citation type="journal article" date="2000" name="Nature">
        <title>Sequence and analysis of chromosome 1 of the plant Arabidopsis thaliana.</title>
        <authorList>
            <person name="Theologis A."/>
            <person name="Ecker J.R."/>
            <person name="Palm C.J."/>
            <person name="Federspiel N.A."/>
            <person name="Kaul S."/>
            <person name="White O."/>
            <person name="Alonso J."/>
            <person name="Altafi H."/>
            <person name="Araujo R."/>
            <person name="Bowman C.L."/>
            <person name="Brooks S.Y."/>
            <person name="Buehler E."/>
            <person name="Chan A."/>
            <person name="Chao Q."/>
            <person name="Chen H."/>
            <person name="Cheuk R.F."/>
            <person name="Chin C.W."/>
            <person name="Chung M.K."/>
            <person name="Conn L."/>
            <person name="Conway A.B."/>
            <person name="Conway A.R."/>
            <person name="Creasy T.H."/>
            <person name="Dewar K."/>
            <person name="Dunn P."/>
            <person name="Etgu P."/>
            <person name="Feldblyum T.V."/>
            <person name="Feng J.-D."/>
            <person name="Fong B."/>
            <person name="Fujii C.Y."/>
            <person name="Gill J.E."/>
            <person name="Goldsmith A.D."/>
            <person name="Haas B."/>
            <person name="Hansen N.F."/>
            <person name="Hughes B."/>
            <person name="Huizar L."/>
            <person name="Hunter J.L."/>
            <person name="Jenkins J."/>
            <person name="Johnson-Hopson C."/>
            <person name="Khan S."/>
            <person name="Khaykin E."/>
            <person name="Kim C.J."/>
            <person name="Koo H.L."/>
            <person name="Kremenetskaia I."/>
            <person name="Kurtz D.B."/>
            <person name="Kwan A."/>
            <person name="Lam B."/>
            <person name="Langin-Hooper S."/>
            <person name="Lee A."/>
            <person name="Lee J.M."/>
            <person name="Lenz C.A."/>
            <person name="Li J.H."/>
            <person name="Li Y.-P."/>
            <person name="Lin X."/>
            <person name="Liu S.X."/>
            <person name="Liu Z.A."/>
            <person name="Luros J.S."/>
            <person name="Maiti R."/>
            <person name="Marziali A."/>
            <person name="Militscher J."/>
            <person name="Miranda M."/>
            <person name="Nguyen M."/>
            <person name="Nierman W.C."/>
            <person name="Osborne B.I."/>
            <person name="Pai G."/>
            <person name="Peterson J."/>
            <person name="Pham P.K."/>
            <person name="Rizzo M."/>
            <person name="Rooney T."/>
            <person name="Rowley D."/>
            <person name="Sakano H."/>
            <person name="Salzberg S.L."/>
            <person name="Schwartz J.R."/>
            <person name="Shinn P."/>
            <person name="Southwick A.M."/>
            <person name="Sun H."/>
            <person name="Tallon L.J."/>
            <person name="Tambunga G."/>
            <person name="Toriumi M.J."/>
            <person name="Town C.D."/>
            <person name="Utterback T."/>
            <person name="Van Aken S."/>
            <person name="Vaysberg M."/>
            <person name="Vysotskaia V.S."/>
            <person name="Walker M."/>
            <person name="Wu D."/>
            <person name="Yu G."/>
            <person name="Fraser C.M."/>
            <person name="Venter J.C."/>
            <person name="Davis R.W."/>
        </authorList>
    </citation>
    <scope>NUCLEOTIDE SEQUENCE [LARGE SCALE GENOMIC DNA]</scope>
    <source>
        <strain>cv. Columbia</strain>
    </source>
</reference>
<reference key="2">
    <citation type="journal article" date="2017" name="Plant J.">
        <title>Araport11: a complete reannotation of the Arabidopsis thaliana reference genome.</title>
        <authorList>
            <person name="Cheng C.Y."/>
            <person name="Krishnakumar V."/>
            <person name="Chan A.P."/>
            <person name="Thibaud-Nissen F."/>
            <person name="Schobel S."/>
            <person name="Town C.D."/>
        </authorList>
    </citation>
    <scope>GENOME REANNOTATION</scope>
    <source>
        <strain>cv. Columbia</strain>
    </source>
</reference>
<reference key="3">
    <citation type="submission" date="2004-11" db="EMBL/GenBank/DDBJ databases">
        <title>Arabidopsis ORF clones.</title>
        <authorList>
            <person name="Cheuk R.F."/>
            <person name="Chen H."/>
            <person name="Kim C.J."/>
            <person name="Shinn P."/>
            <person name="Ecker J.R."/>
        </authorList>
    </citation>
    <scope>NUCLEOTIDE SEQUENCE [LARGE SCALE MRNA] (ISOFORM 1)</scope>
    <source>
        <strain>cv. Columbia</strain>
    </source>
</reference>
<reference key="4">
    <citation type="submission" date="2006-07" db="EMBL/GenBank/DDBJ databases">
        <title>Large-scale analysis of RIKEN Arabidopsis full-length (RAFL) cDNAs.</title>
        <authorList>
            <person name="Totoki Y."/>
            <person name="Seki M."/>
            <person name="Ishida J."/>
            <person name="Nakajima M."/>
            <person name="Enju A."/>
            <person name="Kamiya A."/>
            <person name="Narusaka M."/>
            <person name="Shin-i T."/>
            <person name="Nakagawa M."/>
            <person name="Sakamoto N."/>
            <person name="Oishi K."/>
            <person name="Kohara Y."/>
            <person name="Kobayashi M."/>
            <person name="Toyoda A."/>
            <person name="Sakaki Y."/>
            <person name="Sakurai T."/>
            <person name="Iida K."/>
            <person name="Akiyama K."/>
            <person name="Satou M."/>
            <person name="Toyoda T."/>
            <person name="Konagaya A."/>
            <person name="Carninci P."/>
            <person name="Kawai J."/>
            <person name="Hayashizaki Y."/>
            <person name="Shinozaki K."/>
        </authorList>
    </citation>
    <scope>NUCLEOTIDE SEQUENCE [LARGE SCALE MRNA] (ISOFORM 2)</scope>
    <source>
        <strain>cv. Columbia</strain>
    </source>
</reference>
<reference key="5">
    <citation type="journal article" date="2006" name="BMC Evol. Biol.">
        <title>The monosaccharide transporter gene family in land plants is ancient and shows differential subfamily expression and expansion across lineages.</title>
        <authorList>
            <person name="Johnson D.A."/>
            <person name="Hill J.P."/>
            <person name="Thomas M.A."/>
        </authorList>
    </citation>
    <scope>GENE FAMILY</scope>
</reference>
<organism>
    <name type="scientific">Arabidopsis thaliana</name>
    <name type="common">Mouse-ear cress</name>
    <dbReference type="NCBI Taxonomy" id="3702"/>
    <lineage>
        <taxon>Eukaryota</taxon>
        <taxon>Viridiplantae</taxon>
        <taxon>Streptophyta</taxon>
        <taxon>Embryophyta</taxon>
        <taxon>Tracheophyta</taxon>
        <taxon>Spermatophyta</taxon>
        <taxon>Magnoliopsida</taxon>
        <taxon>eudicotyledons</taxon>
        <taxon>Gunneridae</taxon>
        <taxon>Pentapetalae</taxon>
        <taxon>rosids</taxon>
        <taxon>malvids</taxon>
        <taxon>Brassicales</taxon>
        <taxon>Brassicaceae</taxon>
        <taxon>Camelineae</taxon>
        <taxon>Arabidopsis</taxon>
    </lineage>
</organism>
<keyword id="KW-0025">Alternative splicing</keyword>
<keyword id="KW-0150">Chloroplast</keyword>
<keyword id="KW-0472">Membrane</keyword>
<keyword id="KW-0934">Plastid</keyword>
<keyword id="KW-1185">Reference proteome</keyword>
<keyword id="KW-0762">Sugar transport</keyword>
<keyword id="KW-0812">Transmembrane</keyword>
<keyword id="KW-1133">Transmembrane helix</keyword>
<keyword id="KW-0813">Transport</keyword>
<feature type="chain" id="PRO_0000259885" description="Probable plastidic glucose transporter 1">
    <location>
        <begin position="1"/>
        <end position="524"/>
    </location>
</feature>
<feature type="transmembrane region" description="Helical; Name=1" evidence="2">
    <location>
        <begin position="88"/>
        <end position="108"/>
    </location>
</feature>
<feature type="transmembrane region" description="Helical; Name=2" evidence="2">
    <location>
        <begin position="122"/>
        <end position="142"/>
    </location>
</feature>
<feature type="transmembrane region" description="Helical; Name=3" evidence="2">
    <location>
        <begin position="151"/>
        <end position="171"/>
    </location>
</feature>
<feature type="transmembrane region" description="Helical; Name=4" evidence="2">
    <location>
        <begin position="179"/>
        <end position="199"/>
    </location>
</feature>
<feature type="transmembrane region" description="Helical; Name=5" evidence="2">
    <location>
        <begin position="208"/>
        <end position="228"/>
    </location>
</feature>
<feature type="transmembrane region" description="Helical; Name=6" evidence="2">
    <location>
        <begin position="239"/>
        <end position="259"/>
    </location>
</feature>
<feature type="transmembrane region" description="Helical; Name=7" evidence="2">
    <location>
        <begin position="320"/>
        <end position="340"/>
    </location>
</feature>
<feature type="transmembrane region" description="Helical; Name=8" evidence="2">
    <location>
        <begin position="357"/>
        <end position="377"/>
    </location>
</feature>
<feature type="transmembrane region" description="Helical; Name=9" evidence="2">
    <location>
        <begin position="386"/>
        <end position="406"/>
    </location>
</feature>
<feature type="transmembrane region" description="Helical; Name=10" evidence="2">
    <location>
        <begin position="420"/>
        <end position="440"/>
    </location>
</feature>
<feature type="transmembrane region" description="Helical; Name=11" evidence="2">
    <location>
        <begin position="452"/>
        <end position="472"/>
    </location>
</feature>
<feature type="transmembrane region" description="Helical; Name=12" evidence="2">
    <location>
        <begin position="483"/>
        <end position="503"/>
    </location>
</feature>
<feature type="splice variant" id="VSP_021554" description="In isoform 2." evidence="3">
    <original>VAFIGGSLFVLQQFAGINGV</original>
    <variation>GHVKLHSLGAPFLSYSNSRA</variation>
    <location>
        <begin position="320"/>
        <end position="339"/>
    </location>
</feature>
<feature type="splice variant" id="VSP_021555" description="In isoform 2." evidence="3">
    <location>
        <begin position="340"/>
        <end position="524"/>
    </location>
</feature>
<accession>Q0WVE9</accession>
<accession>Q5XF02</accession>
<accession>Q9ZVN7</accession>
<name>PLST1_ARATH</name>
<gene>
    <name type="ordered locus">At1g05030</name>
    <name type="ORF">T7A14.10</name>
</gene>
<comment type="function">
    <text evidence="1">May be involved in the efflux of glucose towards the cytosol.</text>
</comment>
<comment type="subcellular location">
    <subcellularLocation>
        <location evidence="1">Plastid</location>
        <location evidence="1">Chloroplast membrane</location>
        <topology evidence="1">Multi-pass membrane protein</topology>
    </subcellularLocation>
</comment>
<comment type="alternative products">
    <event type="alternative splicing"/>
    <isoform>
        <id>Q0WVE9-1</id>
        <name>1</name>
        <sequence type="displayed"/>
    </isoform>
    <isoform>
        <id>Q0WVE9-2</id>
        <name>2</name>
        <sequence type="described" ref="VSP_021554 VSP_021555"/>
    </isoform>
</comment>
<comment type="similarity">
    <text evidence="4">Belongs to the major facilitator superfamily. Sugar transporter (TC 2.A.1.1) family.</text>
</comment>
<comment type="sequence caution" evidence="4">
    <conflict type="erroneous gene model prediction">
        <sequence resource="EMBL-CDS" id="AAC98002"/>
    </conflict>
</comment>